<dbReference type="EMBL" id="L43967">
    <property type="protein sequence ID" value="AAC71579.1"/>
    <property type="molecule type" value="Genomic_DNA"/>
</dbReference>
<dbReference type="PIR" id="B64239">
    <property type="entry name" value="B64239"/>
</dbReference>
<dbReference type="RefSeq" id="WP_009885812.1">
    <property type="nucleotide sequence ID" value="NC_000908.2"/>
</dbReference>
<dbReference type="PDB" id="1TM9">
    <property type="method" value="NMR"/>
    <property type="chains" value="A=1-137"/>
</dbReference>
<dbReference type="PDBsum" id="1TM9"/>
<dbReference type="BMRB" id="P47596"/>
<dbReference type="SMR" id="P47596"/>
<dbReference type="STRING" id="243273.MG_354"/>
<dbReference type="GeneID" id="88282535"/>
<dbReference type="KEGG" id="mge:MG_354"/>
<dbReference type="eggNOG" id="ENOG5031Z8U">
    <property type="taxonomic scope" value="Bacteria"/>
</dbReference>
<dbReference type="HOGENOM" id="CLU_1873152_0_0_14"/>
<dbReference type="InParanoid" id="P47596"/>
<dbReference type="OrthoDB" id="9906221at2"/>
<dbReference type="BioCyc" id="MGEN243273:G1GJ2-445-MONOMER"/>
<dbReference type="EvolutionaryTrace" id="P47596"/>
<dbReference type="Proteomes" id="UP000000807">
    <property type="component" value="Chromosome"/>
</dbReference>
<dbReference type="Gene3D" id="1.10.3960.10">
    <property type="entry name" value="MG354-like"/>
    <property type="match status" value="1"/>
</dbReference>
<dbReference type="InterPro" id="IPR015271">
    <property type="entry name" value="DUF1951"/>
</dbReference>
<dbReference type="InterPro" id="IPR035947">
    <property type="entry name" value="MG354-like_sf"/>
</dbReference>
<dbReference type="Pfam" id="PF09188">
    <property type="entry name" value="DUF1951"/>
    <property type="match status" value="1"/>
</dbReference>
<dbReference type="SUPFAM" id="SSF110009">
    <property type="entry name" value="Hypothetical protein MG354"/>
    <property type="match status" value="1"/>
</dbReference>
<name>Y354_MYCGE</name>
<proteinExistence type="evidence at protein level"/>
<organism>
    <name type="scientific">Mycoplasma genitalium (strain ATCC 33530 / DSM 19775 / NCTC 10195 / G37)</name>
    <name type="common">Mycoplasmoides genitalium</name>
    <dbReference type="NCBI Taxonomy" id="243273"/>
    <lineage>
        <taxon>Bacteria</taxon>
        <taxon>Bacillati</taxon>
        <taxon>Mycoplasmatota</taxon>
        <taxon>Mycoplasmoidales</taxon>
        <taxon>Mycoplasmoidaceae</taxon>
        <taxon>Mycoplasmoides</taxon>
    </lineage>
</organism>
<accession>P47596</accession>
<protein>
    <recommendedName>
        <fullName>Uncharacterized protein MG354</fullName>
    </recommendedName>
</protein>
<feature type="chain" id="PRO_0000210561" description="Uncharacterized protein MG354">
    <location>
        <begin position="1"/>
        <end position="137"/>
    </location>
</feature>
<feature type="helix" evidence="1">
    <location>
        <begin position="6"/>
        <end position="15"/>
    </location>
</feature>
<feature type="helix" evidence="1">
    <location>
        <begin position="23"/>
        <end position="31"/>
    </location>
</feature>
<feature type="strand" evidence="1">
    <location>
        <begin position="34"/>
        <end position="42"/>
    </location>
</feature>
<feature type="helix" evidence="1">
    <location>
        <begin position="44"/>
        <end position="51"/>
    </location>
</feature>
<feature type="helix" evidence="1">
    <location>
        <begin position="57"/>
        <end position="74"/>
    </location>
</feature>
<feature type="helix" evidence="1">
    <location>
        <begin position="86"/>
        <end position="89"/>
    </location>
</feature>
<feature type="helix" evidence="1">
    <location>
        <begin position="92"/>
        <end position="106"/>
    </location>
</feature>
<feature type="helix" evidence="1">
    <location>
        <begin position="119"/>
        <end position="129"/>
    </location>
</feature>
<feature type="helix" evidence="1">
    <location>
        <begin position="131"/>
        <end position="134"/>
    </location>
</feature>
<keyword id="KW-0002">3D-structure</keyword>
<keyword id="KW-1185">Reference proteome</keyword>
<reference key="1">
    <citation type="journal article" date="1995" name="Science">
        <title>The minimal gene complement of Mycoplasma genitalium.</title>
        <authorList>
            <person name="Fraser C.M."/>
            <person name="Gocayne J.D."/>
            <person name="White O."/>
            <person name="Adams M.D."/>
            <person name="Clayton R.A."/>
            <person name="Fleischmann R.D."/>
            <person name="Bult C.J."/>
            <person name="Kerlavage A.R."/>
            <person name="Sutton G.G."/>
            <person name="Kelley J.M."/>
            <person name="Fritchman J.L."/>
            <person name="Weidman J.F."/>
            <person name="Small K.V."/>
            <person name="Sandusky M."/>
            <person name="Fuhrmann J.L."/>
            <person name="Nguyen D.T."/>
            <person name="Utterback T.R."/>
            <person name="Saudek D.M."/>
            <person name="Phillips C.A."/>
            <person name="Merrick J.M."/>
            <person name="Tomb J.-F."/>
            <person name="Dougherty B.A."/>
            <person name="Bott K.F."/>
            <person name="Hu P.-C."/>
            <person name="Lucier T.S."/>
            <person name="Peterson S.N."/>
            <person name="Smith H.O."/>
            <person name="Hutchison C.A. III"/>
            <person name="Venter J.C."/>
        </authorList>
    </citation>
    <scope>NUCLEOTIDE SEQUENCE [LARGE SCALE GENOMIC DNA]</scope>
    <source>
        <strain>ATCC 33530 / DSM 19775 / NCTC 10195 / G37</strain>
    </source>
</reference>
<evidence type="ECO:0007829" key="1">
    <source>
        <dbReference type="PDB" id="1TM9"/>
    </source>
</evidence>
<sequence length="137" mass="15704">MEQNNIKEQLISFFNQACSTHQERLDFICSTRESDTFSSVDVPLEPIKNIIEITKDENQQIEITKIAVNNIKTLSSVGATGQYMASFFSTNSEPAIIFCVIYFLYHFGFLKDNNKKQIIKKAYETIADNIADYLNEN</sequence>
<gene>
    <name type="ordered locus">MG354</name>
</gene>